<evidence type="ECO:0000250" key="1"/>
<evidence type="ECO:0000255" key="2"/>
<evidence type="ECO:0000269" key="3">
    <source>
    </source>
</evidence>
<evidence type="ECO:0000269" key="4">
    <source>
    </source>
</evidence>
<evidence type="ECO:0000305" key="5"/>
<organism>
    <name type="scientific">Arabidopsis thaliana</name>
    <name type="common">Mouse-ear cress</name>
    <dbReference type="NCBI Taxonomy" id="3702"/>
    <lineage>
        <taxon>Eukaryota</taxon>
        <taxon>Viridiplantae</taxon>
        <taxon>Streptophyta</taxon>
        <taxon>Embryophyta</taxon>
        <taxon>Tracheophyta</taxon>
        <taxon>Spermatophyta</taxon>
        <taxon>Magnoliopsida</taxon>
        <taxon>eudicotyledons</taxon>
        <taxon>Gunneridae</taxon>
        <taxon>Pentapetalae</taxon>
        <taxon>rosids</taxon>
        <taxon>malvids</taxon>
        <taxon>Brassicales</taxon>
        <taxon>Brassicaceae</taxon>
        <taxon>Camelineae</taxon>
        <taxon>Arabidopsis</taxon>
    </lineage>
</organism>
<comment type="function">
    <text evidence="3 4">Promotes cell expansion-dependent organ growth, probably via a brassinosteroids signaling pathway. Acts downstream of BRI1.</text>
</comment>
<comment type="subcellular location">
    <subcellularLocation>
        <location evidence="1">Membrane</location>
        <topology evidence="1">Multi-pass membrane protein</topology>
    </subcellularLocation>
    <subcellularLocation>
        <location evidence="1">Nucleus</location>
    </subcellularLocation>
    <subcellularLocation>
        <location evidence="1">Cytoplasm</location>
    </subcellularLocation>
    <subcellularLocation>
        <location evidence="4">Endoplasmic reticulum</location>
    </subcellularLocation>
</comment>
<comment type="tissue specificity">
    <text evidence="3">Expressed in cotyledons, roots, flowers, siliques and leaves.</text>
</comment>
<comment type="developmental stage">
    <text evidence="3">Present throughout the cotyledons as well as in the mature regions of roots in young seedlings. Expressed in expanding leaves, but not in leaf primordia and juvenile leaves. In flowers, accumulates in sepals and stamen filaments, as well as at the apices and bases of siliques.</text>
</comment>
<comment type="induction">
    <text evidence="3">By brassinosteroids.</text>
</comment>
<comment type="domain">
    <text evidence="1">The OSR domain is sufficient to promote organ growth.</text>
</comment>
<comment type="disruption phenotype">
    <text evidence="3">Smaller lateral organs including cotyledons and leaves.</text>
</comment>
<comment type="similarity">
    <text evidence="5">Belongs to the plant organ size related (OSR) protein family.</text>
</comment>
<comment type="sequence caution" evidence="5">
    <conflict type="erroneous initiation">
        <sequence resource="EMBL-CDS" id="AAC23415"/>
    </conflict>
    <text>Truncated N-terminus.</text>
</comment>
<keyword id="KW-0963">Cytoplasm</keyword>
<keyword id="KW-0217">Developmental protein</keyword>
<keyword id="KW-0256">Endoplasmic reticulum</keyword>
<keyword id="KW-0472">Membrane</keyword>
<keyword id="KW-0539">Nucleus</keyword>
<keyword id="KW-1185">Reference proteome</keyword>
<keyword id="KW-0812">Transmembrane</keyword>
<keyword id="KW-1133">Transmembrane helix</keyword>
<feature type="chain" id="PRO_0000423599" description="ARGOS-like protein">
    <location>
        <begin position="1"/>
        <end position="135"/>
    </location>
</feature>
<feature type="transmembrane region" description="Helical" evidence="2">
    <location>
        <begin position="76"/>
        <end position="96"/>
    </location>
</feature>
<feature type="transmembrane region" description="Helical" evidence="2">
    <location>
        <begin position="100"/>
        <end position="120"/>
    </location>
</feature>
<feature type="region of interest" description="Organ Size Related (OSR) domain" evidence="1">
    <location>
        <begin position="71"/>
        <end position="122"/>
    </location>
</feature>
<sequence>MIREFSSLQNDIINIQEHYSLNNNMDVRGDHNRKNTSFRGSAPAPIMGKQELFRTLSSQNSPRRLISASYFSLESMVVLVGLTASLLILPLILPPLPPPPFMLLLIPIGIMVLLMVLAFMPSSNSKHVSSSSTFM</sequence>
<dbReference type="EMBL" id="DQ369723">
    <property type="protein sequence ID" value="ABC96792.1"/>
    <property type="molecule type" value="mRNA"/>
</dbReference>
<dbReference type="EMBL" id="AC004005">
    <property type="protein sequence ID" value="AAC23415.1"/>
    <property type="status" value="ALT_INIT"/>
    <property type="molecule type" value="Genomic_DNA"/>
</dbReference>
<dbReference type="EMBL" id="CP002685">
    <property type="protein sequence ID" value="AEC10371.1"/>
    <property type="molecule type" value="Genomic_DNA"/>
</dbReference>
<dbReference type="EMBL" id="AY080817">
    <property type="protein sequence ID" value="AAL87296.1"/>
    <property type="molecule type" value="mRNA"/>
</dbReference>
<dbReference type="EMBL" id="BT000930">
    <property type="protein sequence ID" value="AAN41330.1"/>
    <property type="molecule type" value="mRNA"/>
</dbReference>
<dbReference type="PIR" id="T00688">
    <property type="entry name" value="T00688"/>
</dbReference>
<dbReference type="RefSeq" id="NP_850409.1">
    <property type="nucleotide sequence ID" value="NM_180078.4"/>
</dbReference>
<dbReference type="BioGRID" id="4350">
    <property type="interactions" value="16"/>
</dbReference>
<dbReference type="FunCoup" id="Q8RXL7">
    <property type="interactions" value="4"/>
</dbReference>
<dbReference type="IntAct" id="Q8RXL7">
    <property type="interactions" value="17"/>
</dbReference>
<dbReference type="STRING" id="3702.Q8RXL7"/>
<dbReference type="iPTMnet" id="Q8RXL7"/>
<dbReference type="PaxDb" id="3702-AT2G44080.1"/>
<dbReference type="EnsemblPlants" id="AT2G44080.1">
    <property type="protein sequence ID" value="AT2G44080.1"/>
    <property type="gene ID" value="AT2G44080"/>
</dbReference>
<dbReference type="GeneID" id="819014"/>
<dbReference type="Gramene" id="AT2G44080.1">
    <property type="protein sequence ID" value="AT2G44080.1"/>
    <property type="gene ID" value="AT2G44080"/>
</dbReference>
<dbReference type="KEGG" id="ath:AT2G44080"/>
<dbReference type="Araport" id="AT2G44080"/>
<dbReference type="TAIR" id="AT2G44080">
    <property type="gene designation" value="ARL"/>
</dbReference>
<dbReference type="eggNOG" id="ENOG502S4R4">
    <property type="taxonomic scope" value="Eukaryota"/>
</dbReference>
<dbReference type="HOGENOM" id="CLU_132308_2_0_1"/>
<dbReference type="InParanoid" id="Q8RXL7"/>
<dbReference type="OMA" id="INIQDHY"/>
<dbReference type="PhylomeDB" id="Q8RXL7"/>
<dbReference type="PRO" id="PR:Q8RXL7"/>
<dbReference type="Proteomes" id="UP000006548">
    <property type="component" value="Chromosome 2"/>
</dbReference>
<dbReference type="ExpressionAtlas" id="Q8RXL7">
    <property type="expression patterns" value="baseline and differential"/>
</dbReference>
<dbReference type="GO" id="GO:0005783">
    <property type="term" value="C:endoplasmic reticulum"/>
    <property type="evidence" value="ECO:0000314"/>
    <property type="project" value="TAIR"/>
</dbReference>
<dbReference type="GO" id="GO:0016020">
    <property type="term" value="C:membrane"/>
    <property type="evidence" value="ECO:0007669"/>
    <property type="project" value="UniProtKB-SubCell"/>
</dbReference>
<dbReference type="GO" id="GO:0005634">
    <property type="term" value="C:nucleus"/>
    <property type="evidence" value="ECO:0007669"/>
    <property type="project" value="UniProtKB-SubCell"/>
</dbReference>
<dbReference type="GO" id="GO:0009825">
    <property type="term" value="P:multidimensional cell growth"/>
    <property type="evidence" value="ECO:0000315"/>
    <property type="project" value="TAIR"/>
</dbReference>
<dbReference type="GO" id="GO:0035265">
    <property type="term" value="P:organ growth"/>
    <property type="evidence" value="ECO:0000315"/>
    <property type="project" value="TAIR"/>
</dbReference>
<dbReference type="GO" id="GO:0046622">
    <property type="term" value="P:positive regulation of organ growth"/>
    <property type="evidence" value="ECO:0007669"/>
    <property type="project" value="InterPro"/>
</dbReference>
<dbReference type="GO" id="GO:0009741">
    <property type="term" value="P:response to brassinosteroid"/>
    <property type="evidence" value="ECO:0000270"/>
    <property type="project" value="TAIR"/>
</dbReference>
<dbReference type="InterPro" id="IPR037468">
    <property type="entry name" value="ARGOS/ARL/OSR1"/>
</dbReference>
<dbReference type="PANTHER" id="PTHR36023">
    <property type="entry name" value="ARGOS-LIKE PROTEIN"/>
    <property type="match status" value="1"/>
</dbReference>
<dbReference type="PANTHER" id="PTHR36023:SF3">
    <property type="entry name" value="ARGOS-LIKE PROTEIN"/>
    <property type="match status" value="1"/>
</dbReference>
<gene>
    <name type="primary">ARL</name>
    <name type="ordered locus">At2g44080</name>
    <name type="ORF">F6E13.21</name>
</gene>
<proteinExistence type="evidence at transcript level"/>
<accession>Q8RXL7</accession>
<accession>O80578</accession>
<protein>
    <recommendedName>
        <fullName>ARGOS-like protein</fullName>
    </recommendedName>
</protein>
<name>ARL_ARATH</name>
<reference key="1">
    <citation type="journal article" date="2006" name="Plant J.">
        <title>The Arabidopsis ARGOS-LIKE gene regulates cell expansion during organ growth.</title>
        <authorList>
            <person name="Hu Y."/>
            <person name="Poh H.M."/>
            <person name="Chua N.-H."/>
        </authorList>
    </citation>
    <scope>NUCLEOTIDE SEQUENCE [MRNA]</scope>
    <scope>FUNCTION</scope>
    <scope>DISRUPTION PHENOTYPE</scope>
    <scope>INDUCTION BY BRASSINOSTEROIDS</scope>
    <scope>TISSUE SPECIFICITY</scope>
    <scope>DEVELOPMENTAL STAGE</scope>
</reference>
<reference key="2">
    <citation type="journal article" date="1999" name="Nature">
        <title>Sequence and analysis of chromosome 2 of the plant Arabidopsis thaliana.</title>
        <authorList>
            <person name="Lin X."/>
            <person name="Kaul S."/>
            <person name="Rounsley S.D."/>
            <person name="Shea T.P."/>
            <person name="Benito M.-I."/>
            <person name="Town C.D."/>
            <person name="Fujii C.Y."/>
            <person name="Mason T.M."/>
            <person name="Bowman C.L."/>
            <person name="Barnstead M.E."/>
            <person name="Feldblyum T.V."/>
            <person name="Buell C.R."/>
            <person name="Ketchum K.A."/>
            <person name="Lee J.J."/>
            <person name="Ronning C.M."/>
            <person name="Koo H.L."/>
            <person name="Moffat K.S."/>
            <person name="Cronin L.A."/>
            <person name="Shen M."/>
            <person name="Pai G."/>
            <person name="Van Aken S."/>
            <person name="Umayam L."/>
            <person name="Tallon L.J."/>
            <person name="Gill J.E."/>
            <person name="Adams M.D."/>
            <person name="Carrera A.J."/>
            <person name="Creasy T.H."/>
            <person name="Goodman H.M."/>
            <person name="Somerville C.R."/>
            <person name="Copenhaver G.P."/>
            <person name="Preuss D."/>
            <person name="Nierman W.C."/>
            <person name="White O."/>
            <person name="Eisen J.A."/>
            <person name="Salzberg S.L."/>
            <person name="Fraser C.M."/>
            <person name="Venter J.C."/>
        </authorList>
    </citation>
    <scope>NUCLEOTIDE SEQUENCE [LARGE SCALE GENOMIC DNA]</scope>
    <source>
        <strain>cv. Columbia</strain>
    </source>
</reference>
<reference key="3">
    <citation type="journal article" date="2017" name="Plant J.">
        <title>Araport11: a complete reannotation of the Arabidopsis thaliana reference genome.</title>
        <authorList>
            <person name="Cheng C.Y."/>
            <person name="Krishnakumar V."/>
            <person name="Chan A.P."/>
            <person name="Thibaud-Nissen F."/>
            <person name="Schobel S."/>
            <person name="Town C.D."/>
        </authorList>
    </citation>
    <scope>GENOME REANNOTATION</scope>
    <source>
        <strain>cv. Columbia</strain>
    </source>
</reference>
<reference key="4">
    <citation type="journal article" date="2003" name="Science">
        <title>Empirical analysis of transcriptional activity in the Arabidopsis genome.</title>
        <authorList>
            <person name="Yamada K."/>
            <person name="Lim J."/>
            <person name="Dale J.M."/>
            <person name="Chen H."/>
            <person name="Shinn P."/>
            <person name="Palm C.J."/>
            <person name="Southwick A.M."/>
            <person name="Wu H.C."/>
            <person name="Kim C.J."/>
            <person name="Nguyen M."/>
            <person name="Pham P.K."/>
            <person name="Cheuk R.F."/>
            <person name="Karlin-Newmann G."/>
            <person name="Liu S.X."/>
            <person name="Lam B."/>
            <person name="Sakano H."/>
            <person name="Wu T."/>
            <person name="Yu G."/>
            <person name="Miranda M."/>
            <person name="Quach H.L."/>
            <person name="Tripp M."/>
            <person name="Chang C.H."/>
            <person name="Lee J.M."/>
            <person name="Toriumi M.J."/>
            <person name="Chan M.M."/>
            <person name="Tang C.C."/>
            <person name="Onodera C.S."/>
            <person name="Deng J.M."/>
            <person name="Akiyama K."/>
            <person name="Ansari Y."/>
            <person name="Arakawa T."/>
            <person name="Banh J."/>
            <person name="Banno F."/>
            <person name="Bowser L."/>
            <person name="Brooks S.Y."/>
            <person name="Carninci P."/>
            <person name="Chao Q."/>
            <person name="Choy N."/>
            <person name="Enju A."/>
            <person name="Goldsmith A.D."/>
            <person name="Gurjal M."/>
            <person name="Hansen N.F."/>
            <person name="Hayashizaki Y."/>
            <person name="Johnson-Hopson C."/>
            <person name="Hsuan V.W."/>
            <person name="Iida K."/>
            <person name="Karnes M."/>
            <person name="Khan S."/>
            <person name="Koesema E."/>
            <person name="Ishida J."/>
            <person name="Jiang P.X."/>
            <person name="Jones T."/>
            <person name="Kawai J."/>
            <person name="Kamiya A."/>
            <person name="Meyers C."/>
            <person name="Nakajima M."/>
            <person name="Narusaka M."/>
            <person name="Seki M."/>
            <person name="Sakurai T."/>
            <person name="Satou M."/>
            <person name="Tamse R."/>
            <person name="Vaysberg M."/>
            <person name="Wallender E.K."/>
            <person name="Wong C."/>
            <person name="Yamamura Y."/>
            <person name="Yuan S."/>
            <person name="Shinozaki K."/>
            <person name="Davis R.W."/>
            <person name="Theologis A."/>
            <person name="Ecker J.R."/>
        </authorList>
    </citation>
    <scope>NUCLEOTIDE SEQUENCE [LARGE SCALE MRNA]</scope>
    <source>
        <strain>cv. Columbia</strain>
    </source>
</reference>
<reference key="5">
    <citation type="journal article" date="2011" name="New Phytol.">
        <title>Arabidopsis ORGAN SIZE RELATED1 regulates organ growth and final organ size in orchestration with ARGOS and ARL.</title>
        <authorList>
            <person name="Feng G."/>
            <person name="Qin Z."/>
            <person name="Yan J."/>
            <person name="Zhang X."/>
            <person name="Hu Y."/>
        </authorList>
    </citation>
    <scope>FUNCTION</scope>
    <scope>SUBCELLULAR LOCATION</scope>
    <source>
        <strain>cv. Columbia</strain>
    </source>
</reference>